<sequence length="72" mass="8517">MCLLYTHFYHLILNTRRVDSSFFVFSFHLYFLNDNKGMSPLCLSLVGSGLHLSVMHLLFHVFLFLFDSFLRP</sequence>
<accession>P11673</accession>
<reference key="1">
    <citation type="journal article" date="1988" name="Mol. Gen. Genet.">
        <title>Deletions/insertions, short inverted repeats, sequences resembling att-lambda, and frame shift mutated open reading frames are involved in chloroplast DNA differences in the genus Oenothera subsection Munzia.</title>
        <authorList>
            <person name="Vom Stein J."/>
            <person name="Hachtel W."/>
        </authorList>
    </citation>
    <scope>NUCLEOTIDE SEQUENCE [GENOMIC DNA]</scope>
    <source>
        <strain>cv. Munzia</strain>
    </source>
</reference>
<feature type="chain" id="PRO_0000217520" description="Uncharacterized 8.5 kDa protein">
    <location>
        <begin position="1"/>
        <end position="72"/>
    </location>
</feature>
<geneLocation type="chloroplast"/>
<proteinExistence type="predicted"/>
<dbReference type="EMBL" id="X12859">
    <property type="protein sequence ID" value="CAA31336.1"/>
    <property type="molecule type" value="Genomic_DNA"/>
</dbReference>
<dbReference type="GO" id="GO:0009507">
    <property type="term" value="C:chloroplast"/>
    <property type="evidence" value="ECO:0007669"/>
    <property type="project" value="UniProtKB-SubCell"/>
</dbReference>
<organism>
    <name type="scientific">Oenothera berteroana</name>
    <name type="common">Bertero's evening primrose</name>
    <dbReference type="NCBI Taxonomy" id="3950"/>
    <lineage>
        <taxon>Eukaryota</taxon>
        <taxon>Viridiplantae</taxon>
        <taxon>Streptophyta</taxon>
        <taxon>Embryophyta</taxon>
        <taxon>Tracheophyta</taxon>
        <taxon>Spermatophyta</taxon>
        <taxon>Magnoliopsida</taxon>
        <taxon>eudicotyledons</taxon>
        <taxon>Gunneridae</taxon>
        <taxon>Pentapetalae</taxon>
        <taxon>rosids</taxon>
        <taxon>malvids</taxon>
        <taxon>Myrtales</taxon>
        <taxon>Onagraceae</taxon>
        <taxon>Onagroideae</taxon>
        <taxon>Onagreae</taxon>
        <taxon>Oenothera</taxon>
    </lineage>
</organism>
<keyword id="KW-0150">Chloroplast</keyword>
<keyword id="KW-0934">Plastid</keyword>
<name>YCX1_OENBE</name>
<protein>
    <recommendedName>
        <fullName>Uncharacterized 8.5 kDa protein</fullName>
    </recommendedName>
    <alternativeName>
        <fullName>ORF B72</fullName>
    </alternativeName>
</protein>
<comment type="subcellular location">
    <subcellularLocation>
        <location>Plastid</location>
        <location>Chloroplast</location>
    </subcellularLocation>
</comment>